<gene>
    <name evidence="1" type="primary">ispE</name>
    <name type="ordered locus">Dgeo_0180</name>
</gene>
<protein>
    <recommendedName>
        <fullName evidence="1">4-diphosphocytidyl-2-C-methyl-D-erythritol kinase</fullName>
        <shortName evidence="1">CMK</shortName>
        <ecNumber evidence="1">2.7.1.148</ecNumber>
    </recommendedName>
    <alternativeName>
        <fullName evidence="1">4-(cytidine-5'-diphospho)-2-C-methyl-D-erythritol kinase</fullName>
    </alternativeName>
</protein>
<sequence length="299" mass="30704">MPPECGGPPMPLDPLTLRPLAPSETATYLAPAKVNLGLSVRGLRTDGYHELHSVMVPLVVGDELEIAAADTLTLRVEGAALPTDERNLVYRAARAYLDAAGVSGGATITLRKRLPLASGLGGGSSDAATTLMALARLFPAPVNLPALALTLGADVPFFLLGQAALAQGIGDVLTPLPVPQVPLVLVNPGVEVSARDAYAWLDEEEAFTPPLDVEGLLAALTAQHELPTFNALQGPVAARHAPIQAALAALSSAGLRSPLMSGSGATCFALAASDAQAHAAAQALQAQHPAWWVVATRTL</sequence>
<comment type="function">
    <text evidence="1">Catalyzes the phosphorylation of the position 2 hydroxy group of 4-diphosphocytidyl-2C-methyl-D-erythritol.</text>
</comment>
<comment type="catalytic activity">
    <reaction evidence="1">
        <text>4-CDP-2-C-methyl-D-erythritol + ATP = 4-CDP-2-C-methyl-D-erythritol 2-phosphate + ADP + H(+)</text>
        <dbReference type="Rhea" id="RHEA:18437"/>
        <dbReference type="ChEBI" id="CHEBI:15378"/>
        <dbReference type="ChEBI" id="CHEBI:30616"/>
        <dbReference type="ChEBI" id="CHEBI:57823"/>
        <dbReference type="ChEBI" id="CHEBI:57919"/>
        <dbReference type="ChEBI" id="CHEBI:456216"/>
        <dbReference type="EC" id="2.7.1.148"/>
    </reaction>
</comment>
<comment type="pathway">
    <text evidence="1">Isoprenoid biosynthesis; isopentenyl diphosphate biosynthesis via DXP pathway; isopentenyl diphosphate from 1-deoxy-D-xylulose 5-phosphate: step 3/6.</text>
</comment>
<comment type="similarity">
    <text evidence="1">Belongs to the GHMP kinase family. IspE subfamily.</text>
</comment>
<dbReference type="EC" id="2.7.1.148" evidence="1"/>
<dbReference type="EMBL" id="CP000359">
    <property type="protein sequence ID" value="ABF44483.1"/>
    <property type="molecule type" value="Genomic_DNA"/>
</dbReference>
<dbReference type="SMR" id="Q1J201"/>
<dbReference type="STRING" id="319795.Dgeo_0180"/>
<dbReference type="KEGG" id="dge:Dgeo_0180"/>
<dbReference type="eggNOG" id="COG1947">
    <property type="taxonomic scope" value="Bacteria"/>
</dbReference>
<dbReference type="HOGENOM" id="CLU_053057_1_1_0"/>
<dbReference type="UniPathway" id="UPA00056">
    <property type="reaction ID" value="UER00094"/>
</dbReference>
<dbReference type="Proteomes" id="UP000002431">
    <property type="component" value="Chromosome"/>
</dbReference>
<dbReference type="GO" id="GO:0050515">
    <property type="term" value="F:4-(cytidine 5'-diphospho)-2-C-methyl-D-erythritol kinase activity"/>
    <property type="evidence" value="ECO:0007669"/>
    <property type="project" value="UniProtKB-UniRule"/>
</dbReference>
<dbReference type="GO" id="GO:0005524">
    <property type="term" value="F:ATP binding"/>
    <property type="evidence" value="ECO:0007669"/>
    <property type="project" value="UniProtKB-UniRule"/>
</dbReference>
<dbReference type="GO" id="GO:0019288">
    <property type="term" value="P:isopentenyl diphosphate biosynthetic process, methylerythritol 4-phosphate pathway"/>
    <property type="evidence" value="ECO:0007669"/>
    <property type="project" value="UniProtKB-UniRule"/>
</dbReference>
<dbReference type="GO" id="GO:0016114">
    <property type="term" value="P:terpenoid biosynthetic process"/>
    <property type="evidence" value="ECO:0007669"/>
    <property type="project" value="InterPro"/>
</dbReference>
<dbReference type="Gene3D" id="3.30.230.10">
    <property type="match status" value="1"/>
</dbReference>
<dbReference type="Gene3D" id="3.30.70.890">
    <property type="entry name" value="GHMP kinase, C-terminal domain"/>
    <property type="match status" value="1"/>
</dbReference>
<dbReference type="HAMAP" id="MF_00061">
    <property type="entry name" value="IspE"/>
    <property type="match status" value="1"/>
</dbReference>
<dbReference type="InterPro" id="IPR013750">
    <property type="entry name" value="GHMP_kinase_C_dom"/>
</dbReference>
<dbReference type="InterPro" id="IPR036554">
    <property type="entry name" value="GHMP_kinase_C_sf"/>
</dbReference>
<dbReference type="InterPro" id="IPR006204">
    <property type="entry name" value="GHMP_kinase_N_dom"/>
</dbReference>
<dbReference type="InterPro" id="IPR004424">
    <property type="entry name" value="IspE"/>
</dbReference>
<dbReference type="InterPro" id="IPR020568">
    <property type="entry name" value="Ribosomal_Su5_D2-typ_SF"/>
</dbReference>
<dbReference type="InterPro" id="IPR014721">
    <property type="entry name" value="Ribsml_uS5_D2-typ_fold_subgr"/>
</dbReference>
<dbReference type="NCBIfam" id="TIGR00154">
    <property type="entry name" value="ispE"/>
    <property type="match status" value="1"/>
</dbReference>
<dbReference type="NCBIfam" id="NF011202">
    <property type="entry name" value="PRK14608.1"/>
    <property type="match status" value="1"/>
</dbReference>
<dbReference type="PANTHER" id="PTHR43527">
    <property type="entry name" value="4-DIPHOSPHOCYTIDYL-2-C-METHYL-D-ERYTHRITOL KINASE, CHLOROPLASTIC"/>
    <property type="match status" value="1"/>
</dbReference>
<dbReference type="PANTHER" id="PTHR43527:SF2">
    <property type="entry name" value="4-DIPHOSPHOCYTIDYL-2-C-METHYL-D-ERYTHRITOL KINASE, CHLOROPLASTIC"/>
    <property type="match status" value="1"/>
</dbReference>
<dbReference type="Pfam" id="PF08544">
    <property type="entry name" value="GHMP_kinases_C"/>
    <property type="match status" value="1"/>
</dbReference>
<dbReference type="Pfam" id="PF00288">
    <property type="entry name" value="GHMP_kinases_N"/>
    <property type="match status" value="1"/>
</dbReference>
<dbReference type="PIRSF" id="PIRSF010376">
    <property type="entry name" value="IspE"/>
    <property type="match status" value="1"/>
</dbReference>
<dbReference type="SUPFAM" id="SSF55060">
    <property type="entry name" value="GHMP Kinase, C-terminal domain"/>
    <property type="match status" value="1"/>
</dbReference>
<dbReference type="SUPFAM" id="SSF54211">
    <property type="entry name" value="Ribosomal protein S5 domain 2-like"/>
    <property type="match status" value="1"/>
</dbReference>
<reference key="1">
    <citation type="submission" date="2006-04" db="EMBL/GenBank/DDBJ databases">
        <title>Complete sequence of chromosome of Deinococcus geothermalis DSM 11300.</title>
        <authorList>
            <person name="Copeland A."/>
            <person name="Lucas S."/>
            <person name="Lapidus A."/>
            <person name="Barry K."/>
            <person name="Detter J.C."/>
            <person name="Glavina del Rio T."/>
            <person name="Hammon N."/>
            <person name="Israni S."/>
            <person name="Dalin E."/>
            <person name="Tice H."/>
            <person name="Pitluck S."/>
            <person name="Brettin T."/>
            <person name="Bruce D."/>
            <person name="Han C."/>
            <person name="Tapia R."/>
            <person name="Saunders E."/>
            <person name="Gilna P."/>
            <person name="Schmutz J."/>
            <person name="Larimer F."/>
            <person name="Land M."/>
            <person name="Hauser L."/>
            <person name="Kyrpides N."/>
            <person name="Kim E."/>
            <person name="Daly M.J."/>
            <person name="Fredrickson J.K."/>
            <person name="Makarova K.S."/>
            <person name="Gaidamakova E.K."/>
            <person name="Zhai M."/>
            <person name="Richardson P."/>
        </authorList>
    </citation>
    <scope>NUCLEOTIDE SEQUENCE [LARGE SCALE GENOMIC DNA]</scope>
    <source>
        <strain>DSM 11300 / CIP 105573 / AG-3a</strain>
    </source>
</reference>
<proteinExistence type="inferred from homology"/>
<accession>Q1J201</accession>
<name>ISPE_DEIGD</name>
<organism>
    <name type="scientific">Deinococcus geothermalis (strain DSM 11300 / CIP 105573 / AG-3a)</name>
    <dbReference type="NCBI Taxonomy" id="319795"/>
    <lineage>
        <taxon>Bacteria</taxon>
        <taxon>Thermotogati</taxon>
        <taxon>Deinococcota</taxon>
        <taxon>Deinococci</taxon>
        <taxon>Deinococcales</taxon>
        <taxon>Deinococcaceae</taxon>
        <taxon>Deinococcus</taxon>
    </lineage>
</organism>
<keyword id="KW-0067">ATP-binding</keyword>
<keyword id="KW-0414">Isoprene biosynthesis</keyword>
<keyword id="KW-0418">Kinase</keyword>
<keyword id="KW-0547">Nucleotide-binding</keyword>
<keyword id="KW-0808">Transferase</keyword>
<feature type="chain" id="PRO_0000335709" description="4-diphosphocytidyl-2-C-methyl-D-erythritol kinase">
    <location>
        <begin position="1"/>
        <end position="299"/>
    </location>
</feature>
<feature type="active site" evidence="1">
    <location>
        <position position="33"/>
    </location>
</feature>
<feature type="active site" evidence="1">
    <location>
        <position position="154"/>
    </location>
</feature>
<feature type="binding site" evidence="1">
    <location>
        <begin position="115"/>
        <end position="125"/>
    </location>
    <ligand>
        <name>ATP</name>
        <dbReference type="ChEBI" id="CHEBI:30616"/>
    </ligand>
</feature>
<evidence type="ECO:0000255" key="1">
    <source>
        <dbReference type="HAMAP-Rule" id="MF_00061"/>
    </source>
</evidence>